<protein>
    <recommendedName>
        <fullName evidence="1">Divalent metal cation transporter MntH</fullName>
    </recommendedName>
</protein>
<gene>
    <name evidence="1" type="primary">mntH</name>
    <name type="synonym">mntA2</name>
    <name type="ordered locus">TTE2326</name>
</gene>
<name>MNTH_CALS4</name>
<accession>Q8R7S2</accession>
<proteinExistence type="inferred from homology"/>
<comment type="function">
    <text evidence="1">H(+)-stimulated, divalent metal cation uptake system.</text>
</comment>
<comment type="subcellular location">
    <subcellularLocation>
        <location evidence="1">Cell membrane</location>
        <topology evidence="1">Multi-pass membrane protein</topology>
    </subcellularLocation>
</comment>
<comment type="similarity">
    <text evidence="1">Belongs to the NRAMP family.</text>
</comment>
<reference key="1">
    <citation type="journal article" date="2002" name="Genome Res.">
        <title>A complete sequence of the T. tengcongensis genome.</title>
        <authorList>
            <person name="Bao Q."/>
            <person name="Tian Y."/>
            <person name="Li W."/>
            <person name="Xu Z."/>
            <person name="Xuan Z."/>
            <person name="Hu S."/>
            <person name="Dong W."/>
            <person name="Yang J."/>
            <person name="Chen Y."/>
            <person name="Xue Y."/>
            <person name="Xu Y."/>
            <person name="Lai X."/>
            <person name="Huang L."/>
            <person name="Dong X."/>
            <person name="Ma Y."/>
            <person name="Ling L."/>
            <person name="Tan H."/>
            <person name="Chen R."/>
            <person name="Wang J."/>
            <person name="Yu J."/>
            <person name="Yang H."/>
        </authorList>
    </citation>
    <scope>NUCLEOTIDE SEQUENCE [LARGE SCALE GENOMIC DNA]</scope>
    <source>
        <strain>DSM 15242 / JCM 11007 / NBRC 100824 / MB4</strain>
    </source>
</reference>
<evidence type="ECO:0000255" key="1">
    <source>
        <dbReference type="HAMAP-Rule" id="MF_00221"/>
    </source>
</evidence>
<sequence>METREIASQRRKNLYLGIELKKFLKYLGPAFIVSVAYVDPGNFATNISGGSLFDYHLIWVILWSNVIAIFLQIQSAKLGIATGYNLPEMCSIIFPRKWNWFLWITAELAAMATDLAEFLGGTMGLYLLFHIPMTYAAFLTGVVTFAIVYMEKYGQKVVEGIIFGLVAVISLAYAFELFIARPDWSKVLYHTFIPSIPNKDAMLIAVGILGATVMPHVIYLHSQLVQYRNKDGSLQAKKEHLKMEKIDILVAMNTAFIINAAMLIVSAAVFYKNGIVIESIEEAHKTLEPLLGVFSSWAFGIALLASGFSSSAVGTMAGQTIMKGFVGLNIPLNVRRLVTMVPAITIIALGIDPLKSLIVSQVVLSFELPMAIIPLLLITSNKKFMKEFADTPLERIMGVLVASFVMILNGLLLYLTLKGEV</sequence>
<dbReference type="EMBL" id="AE008691">
    <property type="protein sequence ID" value="AAM25467.1"/>
    <property type="molecule type" value="Genomic_DNA"/>
</dbReference>
<dbReference type="RefSeq" id="WP_011026370.1">
    <property type="nucleotide sequence ID" value="NC_003869.1"/>
</dbReference>
<dbReference type="SMR" id="Q8R7S2"/>
<dbReference type="STRING" id="273068.TTE2326"/>
<dbReference type="KEGG" id="tte:TTE2326"/>
<dbReference type="eggNOG" id="COG1914">
    <property type="taxonomic scope" value="Bacteria"/>
</dbReference>
<dbReference type="HOGENOM" id="CLU_020088_2_0_9"/>
<dbReference type="OrthoDB" id="9787548at2"/>
<dbReference type="Proteomes" id="UP000000555">
    <property type="component" value="Chromosome"/>
</dbReference>
<dbReference type="GO" id="GO:0005886">
    <property type="term" value="C:plasma membrane"/>
    <property type="evidence" value="ECO:0007669"/>
    <property type="project" value="UniProtKB-SubCell"/>
</dbReference>
<dbReference type="GO" id="GO:0015086">
    <property type="term" value="F:cadmium ion transmembrane transporter activity"/>
    <property type="evidence" value="ECO:0007669"/>
    <property type="project" value="TreeGrafter"/>
</dbReference>
<dbReference type="GO" id="GO:0005384">
    <property type="term" value="F:manganese ion transmembrane transporter activity"/>
    <property type="evidence" value="ECO:0007669"/>
    <property type="project" value="TreeGrafter"/>
</dbReference>
<dbReference type="GO" id="GO:0046872">
    <property type="term" value="F:metal ion binding"/>
    <property type="evidence" value="ECO:0007669"/>
    <property type="project" value="UniProtKB-UniRule"/>
</dbReference>
<dbReference type="GO" id="GO:0015293">
    <property type="term" value="F:symporter activity"/>
    <property type="evidence" value="ECO:0007669"/>
    <property type="project" value="UniProtKB-UniRule"/>
</dbReference>
<dbReference type="GO" id="GO:0034755">
    <property type="term" value="P:iron ion transmembrane transport"/>
    <property type="evidence" value="ECO:0007669"/>
    <property type="project" value="TreeGrafter"/>
</dbReference>
<dbReference type="HAMAP" id="MF_00221">
    <property type="entry name" value="NRAMP"/>
    <property type="match status" value="1"/>
</dbReference>
<dbReference type="InterPro" id="IPR001046">
    <property type="entry name" value="NRAMP_fam"/>
</dbReference>
<dbReference type="NCBIfam" id="TIGR01197">
    <property type="entry name" value="nramp"/>
    <property type="match status" value="1"/>
</dbReference>
<dbReference type="NCBIfam" id="NF037982">
    <property type="entry name" value="Nramp_1"/>
    <property type="match status" value="1"/>
</dbReference>
<dbReference type="NCBIfam" id="NF001923">
    <property type="entry name" value="PRK00701.1"/>
    <property type="match status" value="1"/>
</dbReference>
<dbReference type="PANTHER" id="PTHR11706:SF33">
    <property type="entry name" value="NATURAL RESISTANCE-ASSOCIATED MACROPHAGE PROTEIN 2"/>
    <property type="match status" value="1"/>
</dbReference>
<dbReference type="PANTHER" id="PTHR11706">
    <property type="entry name" value="SOLUTE CARRIER PROTEIN FAMILY 11 MEMBER"/>
    <property type="match status" value="1"/>
</dbReference>
<dbReference type="Pfam" id="PF01566">
    <property type="entry name" value="Nramp"/>
    <property type="match status" value="1"/>
</dbReference>
<dbReference type="PRINTS" id="PR00447">
    <property type="entry name" value="NATRESASSCMP"/>
</dbReference>
<keyword id="KW-1003">Cell membrane</keyword>
<keyword id="KW-0406">Ion transport</keyword>
<keyword id="KW-0472">Membrane</keyword>
<keyword id="KW-1185">Reference proteome</keyword>
<keyword id="KW-0769">Symport</keyword>
<keyword id="KW-0812">Transmembrane</keyword>
<keyword id="KW-1133">Transmembrane helix</keyword>
<keyword id="KW-0813">Transport</keyword>
<feature type="chain" id="PRO_0000212642" description="Divalent metal cation transporter MntH">
    <location>
        <begin position="1"/>
        <end position="421"/>
    </location>
</feature>
<feature type="transmembrane region" description="Helical" evidence="1">
    <location>
        <begin position="27"/>
        <end position="47"/>
    </location>
</feature>
<feature type="transmembrane region" description="Helical" evidence="1">
    <location>
        <begin position="51"/>
        <end position="71"/>
    </location>
</feature>
<feature type="transmembrane region" description="Helical" evidence="1">
    <location>
        <begin position="100"/>
        <end position="120"/>
    </location>
</feature>
<feature type="transmembrane region" description="Helical" evidence="1">
    <location>
        <begin position="128"/>
        <end position="148"/>
    </location>
</feature>
<feature type="transmembrane region" description="Helical" evidence="1">
    <location>
        <begin position="160"/>
        <end position="180"/>
    </location>
</feature>
<feature type="transmembrane region" description="Helical" evidence="1">
    <location>
        <begin position="201"/>
        <end position="221"/>
    </location>
</feature>
<feature type="transmembrane region" description="Helical" evidence="1">
    <location>
        <begin position="248"/>
        <end position="268"/>
    </location>
</feature>
<feature type="transmembrane region" description="Helical" evidence="1">
    <location>
        <begin position="289"/>
        <end position="309"/>
    </location>
</feature>
<feature type="transmembrane region" description="Helical" evidence="1">
    <location>
        <begin position="337"/>
        <end position="357"/>
    </location>
</feature>
<feature type="transmembrane region" description="Helical" evidence="1">
    <location>
        <begin position="358"/>
        <end position="378"/>
    </location>
</feature>
<feature type="transmembrane region" description="Helical" evidence="1">
    <location>
        <begin position="396"/>
        <end position="416"/>
    </location>
</feature>
<organism>
    <name type="scientific">Caldanaerobacter subterraneus subsp. tengcongensis (strain DSM 15242 / JCM 11007 / NBRC 100824 / MB4)</name>
    <name type="common">Thermoanaerobacter tengcongensis</name>
    <dbReference type="NCBI Taxonomy" id="273068"/>
    <lineage>
        <taxon>Bacteria</taxon>
        <taxon>Bacillati</taxon>
        <taxon>Bacillota</taxon>
        <taxon>Clostridia</taxon>
        <taxon>Thermoanaerobacterales</taxon>
        <taxon>Thermoanaerobacteraceae</taxon>
        <taxon>Caldanaerobacter</taxon>
    </lineage>
</organism>